<organism>
    <name type="scientific">Salmonella newport (strain SL254)</name>
    <dbReference type="NCBI Taxonomy" id="423368"/>
    <lineage>
        <taxon>Bacteria</taxon>
        <taxon>Pseudomonadati</taxon>
        <taxon>Pseudomonadota</taxon>
        <taxon>Gammaproteobacteria</taxon>
        <taxon>Enterobacterales</taxon>
        <taxon>Enterobacteriaceae</taxon>
        <taxon>Salmonella</taxon>
    </lineage>
</organism>
<protein>
    <recommendedName>
        <fullName evidence="1">Glycine cleavage system H protein</fullName>
    </recommendedName>
</protein>
<evidence type="ECO:0000255" key="1">
    <source>
        <dbReference type="HAMAP-Rule" id="MF_00272"/>
    </source>
</evidence>
<evidence type="ECO:0000255" key="2">
    <source>
        <dbReference type="PROSITE-ProRule" id="PRU01066"/>
    </source>
</evidence>
<gene>
    <name evidence="1" type="primary">gcvH</name>
    <name type="ordered locus">SNSL254_A3289</name>
</gene>
<name>GCSH_SALNS</name>
<accession>B4T549</accession>
<feature type="chain" id="PRO_1000114548" description="Glycine cleavage system H protein">
    <location>
        <begin position="1"/>
        <end position="129"/>
    </location>
</feature>
<feature type="domain" description="Lipoyl-binding" evidence="2">
    <location>
        <begin position="24"/>
        <end position="106"/>
    </location>
</feature>
<feature type="modified residue" description="N6-lipoyllysine" evidence="1">
    <location>
        <position position="65"/>
    </location>
</feature>
<comment type="function">
    <text evidence="1">The glycine cleavage system catalyzes the degradation of glycine. The H protein shuttles the methylamine group of glycine from the P protein to the T protein.</text>
</comment>
<comment type="cofactor">
    <cofactor evidence="1">
        <name>(R)-lipoate</name>
        <dbReference type="ChEBI" id="CHEBI:83088"/>
    </cofactor>
    <text evidence="1">Binds 1 lipoyl cofactor covalently.</text>
</comment>
<comment type="subunit">
    <text evidence="1">The glycine cleavage system is composed of four proteins: P, T, L and H.</text>
</comment>
<comment type="similarity">
    <text evidence="1">Belongs to the GcvH family.</text>
</comment>
<reference key="1">
    <citation type="journal article" date="2011" name="J. Bacteriol.">
        <title>Comparative genomics of 28 Salmonella enterica isolates: evidence for CRISPR-mediated adaptive sublineage evolution.</title>
        <authorList>
            <person name="Fricke W.F."/>
            <person name="Mammel M.K."/>
            <person name="McDermott P.F."/>
            <person name="Tartera C."/>
            <person name="White D.G."/>
            <person name="Leclerc J.E."/>
            <person name="Ravel J."/>
            <person name="Cebula T.A."/>
        </authorList>
    </citation>
    <scope>NUCLEOTIDE SEQUENCE [LARGE SCALE GENOMIC DNA]</scope>
    <source>
        <strain>SL254</strain>
    </source>
</reference>
<keyword id="KW-0450">Lipoyl</keyword>
<proteinExistence type="inferred from homology"/>
<dbReference type="EMBL" id="CP001113">
    <property type="protein sequence ID" value="ACF62846.1"/>
    <property type="molecule type" value="Genomic_DNA"/>
</dbReference>
<dbReference type="RefSeq" id="WP_001295377.1">
    <property type="nucleotide sequence ID" value="NZ_CCMR01000001.1"/>
</dbReference>
<dbReference type="SMR" id="B4T549"/>
<dbReference type="GeneID" id="93779098"/>
<dbReference type="KEGG" id="see:SNSL254_A3289"/>
<dbReference type="HOGENOM" id="CLU_097408_2_1_6"/>
<dbReference type="Proteomes" id="UP000008824">
    <property type="component" value="Chromosome"/>
</dbReference>
<dbReference type="GO" id="GO:0005829">
    <property type="term" value="C:cytosol"/>
    <property type="evidence" value="ECO:0007669"/>
    <property type="project" value="TreeGrafter"/>
</dbReference>
<dbReference type="GO" id="GO:0005960">
    <property type="term" value="C:glycine cleavage complex"/>
    <property type="evidence" value="ECO:0007669"/>
    <property type="project" value="InterPro"/>
</dbReference>
<dbReference type="GO" id="GO:0019464">
    <property type="term" value="P:glycine decarboxylation via glycine cleavage system"/>
    <property type="evidence" value="ECO:0007669"/>
    <property type="project" value="UniProtKB-UniRule"/>
</dbReference>
<dbReference type="CDD" id="cd06848">
    <property type="entry name" value="GCS_H"/>
    <property type="match status" value="1"/>
</dbReference>
<dbReference type="FunFam" id="2.40.50.100:FF:000011">
    <property type="entry name" value="Glycine cleavage system H protein"/>
    <property type="match status" value="1"/>
</dbReference>
<dbReference type="Gene3D" id="2.40.50.100">
    <property type="match status" value="1"/>
</dbReference>
<dbReference type="HAMAP" id="MF_00272">
    <property type="entry name" value="GcvH"/>
    <property type="match status" value="1"/>
</dbReference>
<dbReference type="InterPro" id="IPR003016">
    <property type="entry name" value="2-oxoA_DH_lipoyl-BS"/>
</dbReference>
<dbReference type="InterPro" id="IPR000089">
    <property type="entry name" value="Biotin_lipoyl"/>
</dbReference>
<dbReference type="InterPro" id="IPR002930">
    <property type="entry name" value="GCV_H"/>
</dbReference>
<dbReference type="InterPro" id="IPR033753">
    <property type="entry name" value="GCV_H/Fam206"/>
</dbReference>
<dbReference type="InterPro" id="IPR017453">
    <property type="entry name" value="GCV_H_sub"/>
</dbReference>
<dbReference type="InterPro" id="IPR011053">
    <property type="entry name" value="Single_hybrid_motif"/>
</dbReference>
<dbReference type="NCBIfam" id="TIGR00527">
    <property type="entry name" value="gcvH"/>
    <property type="match status" value="1"/>
</dbReference>
<dbReference type="NCBIfam" id="NF002270">
    <property type="entry name" value="PRK01202.1"/>
    <property type="match status" value="1"/>
</dbReference>
<dbReference type="PANTHER" id="PTHR11715">
    <property type="entry name" value="GLYCINE CLEAVAGE SYSTEM H PROTEIN"/>
    <property type="match status" value="1"/>
</dbReference>
<dbReference type="PANTHER" id="PTHR11715:SF3">
    <property type="entry name" value="GLYCINE CLEAVAGE SYSTEM H PROTEIN-RELATED"/>
    <property type="match status" value="1"/>
</dbReference>
<dbReference type="Pfam" id="PF01597">
    <property type="entry name" value="GCV_H"/>
    <property type="match status" value="1"/>
</dbReference>
<dbReference type="SUPFAM" id="SSF51230">
    <property type="entry name" value="Single hybrid motif"/>
    <property type="match status" value="1"/>
</dbReference>
<dbReference type="PROSITE" id="PS50968">
    <property type="entry name" value="BIOTINYL_LIPOYL"/>
    <property type="match status" value="1"/>
</dbReference>
<dbReference type="PROSITE" id="PS00189">
    <property type="entry name" value="LIPOYL"/>
    <property type="match status" value="1"/>
</dbReference>
<sequence>MSNVPAELKYSKEHEWLRKEADGTYTVGITEHAQELLGDMVFVDLPEVGATVSAGDDCAVAESVKAASDIYAPVSGEIVAVNDALSDSPELVNSEPYAGGWIFKIKASDESELESLLDATAYEALLEDE</sequence>